<accession>Q3ZYG3</accession>
<feature type="chain" id="PRO_0000335626" description="Acetylglutamate kinase">
    <location>
        <begin position="1"/>
        <end position="272"/>
    </location>
</feature>
<feature type="binding site" evidence="1">
    <location>
        <begin position="46"/>
        <end position="47"/>
    </location>
    <ligand>
        <name>substrate</name>
    </ligand>
</feature>
<feature type="binding site" evidence="1">
    <location>
        <position position="68"/>
    </location>
    <ligand>
        <name>substrate</name>
    </ligand>
</feature>
<feature type="binding site" evidence="1">
    <location>
        <position position="166"/>
    </location>
    <ligand>
        <name>substrate</name>
    </ligand>
</feature>
<feature type="site" description="Transition state stabilizer" evidence="1">
    <location>
        <position position="14"/>
    </location>
</feature>
<feature type="site" description="Transition state stabilizer" evidence="1">
    <location>
        <position position="226"/>
    </location>
</feature>
<protein>
    <recommendedName>
        <fullName evidence="1">Acetylglutamate kinase</fullName>
        <ecNumber evidence="1">2.7.2.8</ecNumber>
    </recommendedName>
    <alternativeName>
        <fullName evidence="1">N-acetyl-L-glutamate 5-phosphotransferase</fullName>
    </alternativeName>
    <alternativeName>
        <fullName evidence="1">NAG kinase</fullName>
        <shortName evidence="1">NAGK</shortName>
    </alternativeName>
</protein>
<proteinExistence type="inferred from homology"/>
<sequence length="272" mass="28155">MEMTQSSNHIVVIKLGGSVLDSKDTSLKDIATLKQLGLKPVLIHGGASTVSAWSAKLGLETRLVNGERVTDDATLDVVAAILAGLVNKEIVAALLDMGIKAAGISGVDSATITGQIRATETGYLGDVVQVNTELITALLDANITPVISPVSFHQINRPSGSRRLLNINGDPVAGEIASALQAERLVFLTDVPAVKGKNGEALGEISADHAAELLASGTASGGMIPKLRSCLKATLAGSSACIIDGRKPHMLIRELTEGNCGTTVTGQHLRRS</sequence>
<keyword id="KW-0028">Amino-acid biosynthesis</keyword>
<keyword id="KW-0055">Arginine biosynthesis</keyword>
<keyword id="KW-0067">ATP-binding</keyword>
<keyword id="KW-0963">Cytoplasm</keyword>
<keyword id="KW-0418">Kinase</keyword>
<keyword id="KW-0547">Nucleotide-binding</keyword>
<keyword id="KW-0808">Transferase</keyword>
<dbReference type="EC" id="2.7.2.8" evidence="1"/>
<dbReference type="EMBL" id="AJ965256">
    <property type="protein sequence ID" value="CAI83264.1"/>
    <property type="molecule type" value="Genomic_DNA"/>
</dbReference>
<dbReference type="RefSeq" id="WP_011309615.1">
    <property type="nucleotide sequence ID" value="NC_007356.1"/>
</dbReference>
<dbReference type="SMR" id="Q3ZYG3"/>
<dbReference type="KEGG" id="deh:cbdbA1180"/>
<dbReference type="HOGENOM" id="CLU_053680_1_0_0"/>
<dbReference type="UniPathway" id="UPA00068">
    <property type="reaction ID" value="UER00107"/>
</dbReference>
<dbReference type="Proteomes" id="UP000000433">
    <property type="component" value="Chromosome"/>
</dbReference>
<dbReference type="GO" id="GO:0005737">
    <property type="term" value="C:cytoplasm"/>
    <property type="evidence" value="ECO:0007669"/>
    <property type="project" value="UniProtKB-SubCell"/>
</dbReference>
<dbReference type="GO" id="GO:0003991">
    <property type="term" value="F:acetylglutamate kinase activity"/>
    <property type="evidence" value="ECO:0007669"/>
    <property type="project" value="UniProtKB-UniRule"/>
</dbReference>
<dbReference type="GO" id="GO:0005524">
    <property type="term" value="F:ATP binding"/>
    <property type="evidence" value="ECO:0007669"/>
    <property type="project" value="UniProtKB-UniRule"/>
</dbReference>
<dbReference type="GO" id="GO:0042450">
    <property type="term" value="P:arginine biosynthetic process via ornithine"/>
    <property type="evidence" value="ECO:0007669"/>
    <property type="project" value="UniProtKB-UniRule"/>
</dbReference>
<dbReference type="GO" id="GO:0006526">
    <property type="term" value="P:L-arginine biosynthetic process"/>
    <property type="evidence" value="ECO:0007669"/>
    <property type="project" value="UniProtKB-UniPathway"/>
</dbReference>
<dbReference type="CDD" id="cd04238">
    <property type="entry name" value="AAK_NAGK-like"/>
    <property type="match status" value="1"/>
</dbReference>
<dbReference type="Gene3D" id="3.40.1160.10">
    <property type="entry name" value="Acetylglutamate kinase-like"/>
    <property type="match status" value="1"/>
</dbReference>
<dbReference type="HAMAP" id="MF_00082">
    <property type="entry name" value="ArgB"/>
    <property type="match status" value="1"/>
</dbReference>
<dbReference type="InterPro" id="IPR036393">
    <property type="entry name" value="AceGlu_kinase-like_sf"/>
</dbReference>
<dbReference type="InterPro" id="IPR004662">
    <property type="entry name" value="AcgluKinase_fam"/>
</dbReference>
<dbReference type="InterPro" id="IPR037528">
    <property type="entry name" value="ArgB"/>
</dbReference>
<dbReference type="InterPro" id="IPR001048">
    <property type="entry name" value="Asp/Glu/Uridylate_kinase"/>
</dbReference>
<dbReference type="InterPro" id="IPR001057">
    <property type="entry name" value="Glu/AcGlu_kinase"/>
</dbReference>
<dbReference type="NCBIfam" id="TIGR00761">
    <property type="entry name" value="argB"/>
    <property type="match status" value="1"/>
</dbReference>
<dbReference type="PANTHER" id="PTHR23342">
    <property type="entry name" value="N-ACETYLGLUTAMATE SYNTHASE"/>
    <property type="match status" value="1"/>
</dbReference>
<dbReference type="PANTHER" id="PTHR23342:SF0">
    <property type="entry name" value="N-ACETYLGLUTAMATE SYNTHASE, MITOCHONDRIAL"/>
    <property type="match status" value="1"/>
</dbReference>
<dbReference type="Pfam" id="PF00696">
    <property type="entry name" value="AA_kinase"/>
    <property type="match status" value="1"/>
</dbReference>
<dbReference type="PIRSF" id="PIRSF000728">
    <property type="entry name" value="NAGK"/>
    <property type="match status" value="1"/>
</dbReference>
<dbReference type="PRINTS" id="PR00474">
    <property type="entry name" value="GLU5KINASE"/>
</dbReference>
<dbReference type="SUPFAM" id="SSF53633">
    <property type="entry name" value="Carbamate kinase-like"/>
    <property type="match status" value="1"/>
</dbReference>
<evidence type="ECO:0000255" key="1">
    <source>
        <dbReference type="HAMAP-Rule" id="MF_00082"/>
    </source>
</evidence>
<comment type="function">
    <text evidence="1">Catalyzes the ATP-dependent phosphorylation of N-acetyl-L-glutamate.</text>
</comment>
<comment type="catalytic activity">
    <reaction evidence="1">
        <text>N-acetyl-L-glutamate + ATP = N-acetyl-L-glutamyl 5-phosphate + ADP</text>
        <dbReference type="Rhea" id="RHEA:14629"/>
        <dbReference type="ChEBI" id="CHEBI:30616"/>
        <dbReference type="ChEBI" id="CHEBI:44337"/>
        <dbReference type="ChEBI" id="CHEBI:57936"/>
        <dbReference type="ChEBI" id="CHEBI:456216"/>
        <dbReference type="EC" id="2.7.2.8"/>
    </reaction>
</comment>
<comment type="pathway">
    <text evidence="1">Amino-acid biosynthesis; L-arginine biosynthesis; N(2)-acetyl-L-ornithine from L-glutamate: step 2/4.</text>
</comment>
<comment type="subcellular location">
    <subcellularLocation>
        <location evidence="1">Cytoplasm</location>
    </subcellularLocation>
</comment>
<comment type="similarity">
    <text evidence="1">Belongs to the acetylglutamate kinase family. ArgB subfamily.</text>
</comment>
<gene>
    <name evidence="1" type="primary">argB</name>
    <name type="ordered locus">cbdbA1180</name>
</gene>
<reference key="1">
    <citation type="journal article" date="2005" name="Nat. Biotechnol.">
        <title>Genome sequence of the chlorinated compound-respiring bacterium Dehalococcoides species strain CBDB1.</title>
        <authorList>
            <person name="Kube M."/>
            <person name="Beck A."/>
            <person name="Zinder S.H."/>
            <person name="Kuhl H."/>
            <person name="Reinhardt R."/>
            <person name="Adrian L."/>
        </authorList>
    </citation>
    <scope>NUCLEOTIDE SEQUENCE [LARGE SCALE GENOMIC DNA]</scope>
    <source>
        <strain>CBDB1</strain>
    </source>
</reference>
<organism>
    <name type="scientific">Dehalococcoides mccartyi (strain CBDB1)</name>
    <dbReference type="NCBI Taxonomy" id="255470"/>
    <lineage>
        <taxon>Bacteria</taxon>
        <taxon>Bacillati</taxon>
        <taxon>Chloroflexota</taxon>
        <taxon>Dehalococcoidia</taxon>
        <taxon>Dehalococcoidales</taxon>
        <taxon>Dehalococcoidaceae</taxon>
        <taxon>Dehalococcoides</taxon>
    </lineage>
</organism>
<name>ARGB_DEHMC</name>